<protein>
    <recommendedName>
        <fullName evidence="5">Oligopeptide transport system permease protein OppB</fullName>
    </recommendedName>
</protein>
<feature type="chain" id="PRO_0000060143" description="Oligopeptide transport system permease protein OppB">
    <location>
        <begin position="1"/>
        <end position="306"/>
    </location>
</feature>
<feature type="topological domain" description="Cytoplasmic" evidence="5">
    <location>
        <begin position="1"/>
        <end position="11"/>
    </location>
</feature>
<feature type="transmembrane region" description="Helical" evidence="1">
    <location>
        <begin position="12"/>
        <end position="32"/>
    </location>
</feature>
<feature type="topological domain" description="Periplasmic" evidence="5">
    <location>
        <begin position="33"/>
        <end position="99"/>
    </location>
</feature>
<feature type="transmembrane region" description="Helical" evidence="1">
    <location>
        <begin position="100"/>
        <end position="120"/>
    </location>
</feature>
<feature type="topological domain" description="Cytoplasmic" evidence="5">
    <location>
        <begin position="121"/>
        <end position="137"/>
    </location>
</feature>
<feature type="transmembrane region" description="Helical" evidence="1">
    <location>
        <begin position="138"/>
        <end position="158"/>
    </location>
</feature>
<feature type="topological domain" description="Periplasmic" evidence="5">
    <location>
        <begin position="159"/>
        <end position="169"/>
    </location>
</feature>
<feature type="transmembrane region" description="Helical" evidence="1">
    <location>
        <begin position="170"/>
        <end position="190"/>
    </location>
</feature>
<feature type="topological domain" description="Cytoplasmic" evidence="5">
    <location>
        <begin position="191"/>
        <end position="229"/>
    </location>
</feature>
<feature type="transmembrane region" description="Helical" evidence="1">
    <location>
        <begin position="230"/>
        <end position="250"/>
    </location>
</feature>
<feature type="topological domain" description="Periplasmic" evidence="5">
    <location>
        <begin position="251"/>
        <end position="279"/>
    </location>
</feature>
<feature type="transmembrane region" description="Helical" evidence="1">
    <location>
        <begin position="280"/>
        <end position="300"/>
    </location>
</feature>
<feature type="topological domain" description="Cytoplasmic" evidence="3">
    <location>
        <begin position="301"/>
        <end position="306"/>
    </location>
</feature>
<feature type="domain" description="ABC transmembrane type-1" evidence="2">
    <location>
        <begin position="94"/>
        <end position="293"/>
    </location>
</feature>
<reference key="1">
    <citation type="journal article" date="1996" name="DNA Res.">
        <title>A 570-kb DNA sequence of the Escherichia coli K-12 genome corresponding to the 28.0-40.1 min region on the linkage map.</title>
        <authorList>
            <person name="Aiba H."/>
            <person name="Baba T."/>
            <person name="Fujita K."/>
            <person name="Hayashi K."/>
            <person name="Inada T."/>
            <person name="Isono K."/>
            <person name="Itoh T."/>
            <person name="Kasai H."/>
            <person name="Kashimoto K."/>
            <person name="Kimura S."/>
            <person name="Kitakawa M."/>
            <person name="Kitagawa M."/>
            <person name="Makino K."/>
            <person name="Miki T."/>
            <person name="Mizobuchi K."/>
            <person name="Mori H."/>
            <person name="Mori T."/>
            <person name="Motomura K."/>
            <person name="Nakade S."/>
            <person name="Nakamura Y."/>
            <person name="Nashimoto H."/>
            <person name="Nishio Y."/>
            <person name="Oshima T."/>
            <person name="Saito N."/>
            <person name="Sampei G."/>
            <person name="Seki Y."/>
            <person name="Sivasundaram S."/>
            <person name="Tagami H."/>
            <person name="Takeda J."/>
            <person name="Takemoto K."/>
            <person name="Takeuchi Y."/>
            <person name="Wada C."/>
            <person name="Yamamoto Y."/>
            <person name="Horiuchi T."/>
        </authorList>
    </citation>
    <scope>NUCLEOTIDE SEQUENCE [LARGE SCALE GENOMIC DNA]</scope>
    <source>
        <strain>K12 / W3110 / ATCC 27325 / DSM 5911</strain>
    </source>
</reference>
<reference key="2">
    <citation type="journal article" date="1997" name="Science">
        <title>The complete genome sequence of Escherichia coli K-12.</title>
        <authorList>
            <person name="Blattner F.R."/>
            <person name="Plunkett G. III"/>
            <person name="Bloch C.A."/>
            <person name="Perna N.T."/>
            <person name="Burland V."/>
            <person name="Riley M."/>
            <person name="Collado-Vides J."/>
            <person name="Glasner J.D."/>
            <person name="Rode C.K."/>
            <person name="Mayhew G.F."/>
            <person name="Gregor J."/>
            <person name="Davis N.W."/>
            <person name="Kirkpatrick H.A."/>
            <person name="Goeden M.A."/>
            <person name="Rose D.J."/>
            <person name="Mau B."/>
            <person name="Shao Y."/>
        </authorList>
    </citation>
    <scope>NUCLEOTIDE SEQUENCE [LARGE SCALE GENOMIC DNA]</scope>
    <source>
        <strain>K12 / MG1655 / ATCC 47076</strain>
    </source>
</reference>
<reference key="3">
    <citation type="journal article" date="2006" name="Mol. Syst. Biol.">
        <title>Highly accurate genome sequences of Escherichia coli K-12 strains MG1655 and W3110.</title>
        <authorList>
            <person name="Hayashi K."/>
            <person name="Morooka N."/>
            <person name="Yamamoto Y."/>
            <person name="Fujita K."/>
            <person name="Isono K."/>
            <person name="Choi S."/>
            <person name="Ohtsubo E."/>
            <person name="Baba T."/>
            <person name="Wanner B.L."/>
            <person name="Mori H."/>
            <person name="Horiuchi T."/>
        </authorList>
    </citation>
    <scope>NUCLEOTIDE SEQUENCE [LARGE SCALE GENOMIC DNA]</scope>
    <source>
        <strain>K12 / W3110 / ATCC 27325 / DSM 5911</strain>
    </source>
</reference>
<reference key="4">
    <citation type="journal article" date="1990" name="J. Biol. Chem.">
        <title>Identification of the polyamine-induced protein as a periplasmic oligopeptide binding protein.</title>
        <authorList>
            <person name="Kashiwagi K."/>
            <person name="Yamaguchi Y."/>
            <person name="Sakai Y."/>
            <person name="Kobayashi H."/>
            <person name="Igarashi K."/>
        </authorList>
    </citation>
    <scope>NUCLEOTIDE SEQUENCE [GENOMIC DNA] OF 1-16</scope>
</reference>
<reference key="5">
    <citation type="journal article" date="1998" name="J. Bacteriol.">
        <title>MppA, a periplasmic binding protein essential for import of the bacterial cell wall peptide L-alanyl-gamma-D-glutamyl-meso-diaminopimelate.</title>
        <authorList>
            <person name="Park J.T."/>
            <person name="Raychaudhuri D."/>
            <person name="Li H."/>
            <person name="Normark S."/>
            <person name="Mengin-Lecreulx D."/>
        </authorList>
    </citation>
    <scope>FUNCTION</scope>
    <scope>SUBUNIT</scope>
    <source>
        <strain>K12 / AT980</strain>
    </source>
</reference>
<reference key="6">
    <citation type="journal article" date="2005" name="Science">
        <title>Global topology analysis of the Escherichia coli inner membrane proteome.</title>
        <authorList>
            <person name="Daley D.O."/>
            <person name="Rapp M."/>
            <person name="Granseth E."/>
            <person name="Melen K."/>
            <person name="Drew D."/>
            <person name="von Heijne G."/>
        </authorList>
    </citation>
    <scope>TOPOLOGY [LARGE SCALE ANALYSIS]</scope>
    <scope>SUBCELLULAR LOCATION</scope>
    <source>
        <strain>K12 / MG1655 / ATCC 47076</strain>
    </source>
</reference>
<name>OPPB_ECOLI</name>
<sequence>MLKFILRRCLEAIPTLFILITISFFMMRLAPGSPFTGERTLPPEVMANIEAKYHLNDPIMTQYFSYLKQLAHGDFGPSFKYKDYSVNDLVASSFPVSAKLGAAAFFLAVILGVSAGVIAALKQNTKWDYTVMGLAMTGVVIPSFVVAPLLVMIFAIILHWLPGGGWNGGALKFMILPMVALSLAYIASIARITRGSMIEVLHSNFIRTARAKGLPMRRIILRHALKPALLPVLSYMGPAFVGIITGSMVIETIYGLPGIGQLFVNGALNRDYSLVLSLTILVGALTILFNAIVDVLYAVIDPKIRY</sequence>
<evidence type="ECO:0000255" key="1"/>
<evidence type="ECO:0000255" key="2">
    <source>
        <dbReference type="PROSITE-ProRule" id="PRU00441"/>
    </source>
</evidence>
<evidence type="ECO:0000269" key="3">
    <source>
    </source>
</evidence>
<evidence type="ECO:0000269" key="4">
    <source>
    </source>
</evidence>
<evidence type="ECO:0000305" key="5"/>
<evidence type="ECO:0000305" key="6">
    <source>
    </source>
</evidence>
<accession>P0AFH2</accession>
<accession>P31132</accession>
<accession>P76026</accession>
<accession>P77550</accession>
<dbReference type="EMBL" id="U00096">
    <property type="protein sequence ID" value="AAC74326.1"/>
    <property type="molecule type" value="Genomic_DNA"/>
</dbReference>
<dbReference type="EMBL" id="AP009048">
    <property type="protein sequence ID" value="BAA14776.2"/>
    <property type="molecule type" value="Genomic_DNA"/>
</dbReference>
<dbReference type="EMBL" id="J05433">
    <property type="status" value="NOT_ANNOTATED_CDS"/>
    <property type="molecule type" value="Genomic_DNA"/>
</dbReference>
<dbReference type="PIR" id="G64871">
    <property type="entry name" value="B36263"/>
</dbReference>
<dbReference type="RefSeq" id="NP_415760.1">
    <property type="nucleotide sequence ID" value="NC_000913.3"/>
</dbReference>
<dbReference type="RefSeq" id="WP_000911112.1">
    <property type="nucleotide sequence ID" value="NZ_STEB01000005.1"/>
</dbReference>
<dbReference type="SMR" id="P0AFH2"/>
<dbReference type="BioGRID" id="4261152">
    <property type="interactions" value="281"/>
</dbReference>
<dbReference type="ComplexPortal" id="CPX-4343">
    <property type="entry name" value="Murein tripeptide ABC transporter complex"/>
</dbReference>
<dbReference type="ComplexPortal" id="CPX-4344">
    <property type="entry name" value="Oligopeptide ABC transporter complex"/>
</dbReference>
<dbReference type="DIP" id="DIP-48074N"/>
<dbReference type="FunCoup" id="P0AFH2">
    <property type="interactions" value="329"/>
</dbReference>
<dbReference type="STRING" id="511145.b1244"/>
<dbReference type="TCDB" id="3.A.1.5.41">
    <property type="family name" value="the atp-binding cassette (abc) superfamily"/>
</dbReference>
<dbReference type="jPOST" id="P0AFH2"/>
<dbReference type="PaxDb" id="511145-b1244"/>
<dbReference type="EnsemblBacteria" id="AAC74326">
    <property type="protein sequence ID" value="AAC74326"/>
    <property type="gene ID" value="b1244"/>
</dbReference>
<dbReference type="GeneID" id="75203356"/>
<dbReference type="GeneID" id="945823"/>
<dbReference type="KEGG" id="ecj:JW1236"/>
<dbReference type="KEGG" id="eco:b1244"/>
<dbReference type="KEGG" id="ecoc:C3026_07310"/>
<dbReference type="PATRIC" id="fig|1411691.4.peg.1039"/>
<dbReference type="EchoBASE" id="EB0669"/>
<dbReference type="eggNOG" id="COG0601">
    <property type="taxonomic scope" value="Bacteria"/>
</dbReference>
<dbReference type="InParanoid" id="P0AFH2"/>
<dbReference type="OMA" id="IPMWWFG"/>
<dbReference type="OrthoDB" id="9805855at2"/>
<dbReference type="PhylomeDB" id="P0AFH2"/>
<dbReference type="BioCyc" id="EcoCyc:OPPB-MONOMER"/>
<dbReference type="BioCyc" id="MetaCyc:OPPB-MONOMER"/>
<dbReference type="PRO" id="PR:P0AFH2"/>
<dbReference type="Proteomes" id="UP000000625">
    <property type="component" value="Chromosome"/>
</dbReference>
<dbReference type="GO" id="GO:0055052">
    <property type="term" value="C:ATP-binding cassette (ABC) transporter complex, substrate-binding subunit-containing"/>
    <property type="evidence" value="ECO:0000303"/>
    <property type="project" value="ComplexPortal"/>
</dbReference>
<dbReference type="GO" id="GO:0016020">
    <property type="term" value="C:membrane"/>
    <property type="evidence" value="ECO:0000303"/>
    <property type="project" value="ComplexPortal"/>
</dbReference>
<dbReference type="GO" id="GO:0005886">
    <property type="term" value="C:plasma membrane"/>
    <property type="evidence" value="ECO:0000314"/>
    <property type="project" value="EcoCyc"/>
</dbReference>
<dbReference type="GO" id="GO:0015640">
    <property type="term" value="F:peptidoglycan peptide transmembrane transporter activity"/>
    <property type="evidence" value="ECO:0000269"/>
    <property type="project" value="EcoCyc"/>
</dbReference>
<dbReference type="GO" id="GO:0140205">
    <property type="term" value="P:oligopeptide import across plasma membrane"/>
    <property type="evidence" value="ECO:0000303"/>
    <property type="project" value="ComplexPortal"/>
</dbReference>
<dbReference type="GO" id="GO:0015834">
    <property type="term" value="P:peptidoglycan-associated peptide transport"/>
    <property type="evidence" value="ECO:0000269"/>
    <property type="project" value="EcoCyc"/>
</dbReference>
<dbReference type="GO" id="GO:0015031">
    <property type="term" value="P:protein transport"/>
    <property type="evidence" value="ECO:0007669"/>
    <property type="project" value="UniProtKB-KW"/>
</dbReference>
<dbReference type="GO" id="GO:0140207">
    <property type="term" value="P:tripeptide import across plasma membrane"/>
    <property type="evidence" value="ECO:0000303"/>
    <property type="project" value="ComplexPortal"/>
</dbReference>
<dbReference type="CDD" id="cd06261">
    <property type="entry name" value="TM_PBP2"/>
    <property type="match status" value="1"/>
</dbReference>
<dbReference type="FunFam" id="1.10.3720.10:FF:000016">
    <property type="entry name" value="Oligopeptide transport system permease OppB"/>
    <property type="match status" value="1"/>
</dbReference>
<dbReference type="Gene3D" id="1.10.3720.10">
    <property type="entry name" value="MetI-like"/>
    <property type="match status" value="1"/>
</dbReference>
<dbReference type="InterPro" id="IPR045621">
    <property type="entry name" value="BPD_transp_1_N"/>
</dbReference>
<dbReference type="InterPro" id="IPR000515">
    <property type="entry name" value="MetI-like"/>
</dbReference>
<dbReference type="InterPro" id="IPR035906">
    <property type="entry name" value="MetI-like_sf"/>
</dbReference>
<dbReference type="NCBIfam" id="NF007008">
    <property type="entry name" value="PRK09471.1"/>
    <property type="match status" value="1"/>
</dbReference>
<dbReference type="PANTHER" id="PTHR43163">
    <property type="entry name" value="DIPEPTIDE TRANSPORT SYSTEM PERMEASE PROTEIN DPPB-RELATED"/>
    <property type="match status" value="1"/>
</dbReference>
<dbReference type="PANTHER" id="PTHR43163:SF6">
    <property type="entry name" value="DIPEPTIDE TRANSPORT SYSTEM PERMEASE PROTEIN DPPB-RELATED"/>
    <property type="match status" value="1"/>
</dbReference>
<dbReference type="Pfam" id="PF00528">
    <property type="entry name" value="BPD_transp_1"/>
    <property type="match status" value="1"/>
</dbReference>
<dbReference type="Pfam" id="PF19300">
    <property type="entry name" value="BPD_transp_1_N"/>
    <property type="match status" value="1"/>
</dbReference>
<dbReference type="SUPFAM" id="SSF161098">
    <property type="entry name" value="MetI-like"/>
    <property type="match status" value="1"/>
</dbReference>
<dbReference type="PROSITE" id="PS50928">
    <property type="entry name" value="ABC_TM1"/>
    <property type="match status" value="1"/>
</dbReference>
<comment type="function">
    <text evidence="4 5">Part of the ABC transporter complex OppABCDF involved in the uptake of oligopeptides and of the ABC transporter complex MppA-OppBCDF involved in the uptake of the cell wall murein tripeptide L-alanyl-gamma-D-glutamyl-meso-diaminopimelate (PubMed:9495761). Probably responsible for the translocation of the substrate across the membrane (Probable). Plays an important nutritional role and is involved in the recycling of cell wall peptides (PubMed:9495761).</text>
</comment>
<comment type="subunit">
    <text evidence="6">The complex is composed of two ATP-binding proteins (OppD and OppF), two transmembrane proteins (OppB and OppC) and a solute-binding protein (OppA or MppA).</text>
</comment>
<comment type="subcellular location">
    <subcellularLocation>
        <location evidence="3">Cell inner membrane</location>
        <topology evidence="1">Multi-pass membrane protein</topology>
    </subcellularLocation>
</comment>
<comment type="similarity">
    <text evidence="5">Belongs to the binding-protein-dependent transport system permease family. OppBC subfamily.</text>
</comment>
<keyword id="KW-0997">Cell inner membrane</keyword>
<keyword id="KW-1003">Cell membrane</keyword>
<keyword id="KW-0472">Membrane</keyword>
<keyword id="KW-0571">Peptide transport</keyword>
<keyword id="KW-0653">Protein transport</keyword>
<keyword id="KW-1185">Reference proteome</keyword>
<keyword id="KW-0812">Transmembrane</keyword>
<keyword id="KW-1133">Transmembrane helix</keyword>
<keyword id="KW-0813">Transport</keyword>
<organism>
    <name type="scientific">Escherichia coli (strain K12)</name>
    <dbReference type="NCBI Taxonomy" id="83333"/>
    <lineage>
        <taxon>Bacteria</taxon>
        <taxon>Pseudomonadati</taxon>
        <taxon>Pseudomonadota</taxon>
        <taxon>Gammaproteobacteria</taxon>
        <taxon>Enterobacterales</taxon>
        <taxon>Enterobacteriaceae</taxon>
        <taxon>Escherichia</taxon>
    </lineage>
</organism>
<proteinExistence type="evidence at protein level"/>
<gene>
    <name type="primary">oppB</name>
    <name type="ordered locus">b1244</name>
    <name type="ordered locus">JW1236</name>
</gene>